<gene>
    <name type="primary">NSA1</name>
    <name type="ordered locus">DEHA2C10186g</name>
</gene>
<feature type="chain" id="PRO_0000320398" description="Ribosome biogenesis protein NSA1">
    <location>
        <begin position="1"/>
        <end position="430"/>
    </location>
</feature>
<feature type="region of interest" description="Disordered" evidence="2">
    <location>
        <begin position="372"/>
        <end position="430"/>
    </location>
</feature>
<feature type="compositionally biased region" description="Acidic residues" evidence="2">
    <location>
        <begin position="372"/>
        <end position="382"/>
    </location>
</feature>
<feature type="compositionally biased region" description="Basic residues" evidence="2">
    <location>
        <begin position="386"/>
        <end position="397"/>
    </location>
</feature>
<feature type="compositionally biased region" description="Acidic residues" evidence="2">
    <location>
        <begin position="401"/>
        <end position="411"/>
    </location>
</feature>
<protein>
    <recommendedName>
        <fullName>Ribosome biogenesis protein NSA1</fullName>
    </recommendedName>
</protein>
<comment type="function">
    <text evidence="1">Involved in the biogenesis of the 60S ribosomal subunit.</text>
</comment>
<comment type="subunit">
    <text evidence="1">Component of the pre-66S ribosomal particle.</text>
</comment>
<comment type="subcellular location">
    <subcellularLocation>
        <location evidence="1">Nucleus</location>
        <location evidence="1">Nucleolus</location>
    </subcellularLocation>
</comment>
<comment type="similarity">
    <text evidence="3">Belongs to the NSA1 family.</text>
</comment>
<keyword id="KW-0539">Nucleus</keyword>
<keyword id="KW-1185">Reference proteome</keyword>
<keyword id="KW-0690">Ribosome biogenesis</keyword>
<keyword id="KW-0698">rRNA processing</keyword>
<reference key="1">
    <citation type="journal article" date="2004" name="Nature">
        <title>Genome evolution in yeasts.</title>
        <authorList>
            <person name="Dujon B."/>
            <person name="Sherman D."/>
            <person name="Fischer G."/>
            <person name="Durrens P."/>
            <person name="Casaregola S."/>
            <person name="Lafontaine I."/>
            <person name="de Montigny J."/>
            <person name="Marck C."/>
            <person name="Neuveglise C."/>
            <person name="Talla E."/>
            <person name="Goffard N."/>
            <person name="Frangeul L."/>
            <person name="Aigle M."/>
            <person name="Anthouard V."/>
            <person name="Babour A."/>
            <person name="Barbe V."/>
            <person name="Barnay S."/>
            <person name="Blanchin S."/>
            <person name="Beckerich J.-M."/>
            <person name="Beyne E."/>
            <person name="Bleykasten C."/>
            <person name="Boisrame A."/>
            <person name="Boyer J."/>
            <person name="Cattolico L."/>
            <person name="Confanioleri F."/>
            <person name="de Daruvar A."/>
            <person name="Despons L."/>
            <person name="Fabre E."/>
            <person name="Fairhead C."/>
            <person name="Ferry-Dumazet H."/>
            <person name="Groppi A."/>
            <person name="Hantraye F."/>
            <person name="Hennequin C."/>
            <person name="Jauniaux N."/>
            <person name="Joyet P."/>
            <person name="Kachouri R."/>
            <person name="Kerrest A."/>
            <person name="Koszul R."/>
            <person name="Lemaire M."/>
            <person name="Lesur I."/>
            <person name="Ma L."/>
            <person name="Muller H."/>
            <person name="Nicaud J.-M."/>
            <person name="Nikolski M."/>
            <person name="Oztas S."/>
            <person name="Ozier-Kalogeropoulos O."/>
            <person name="Pellenz S."/>
            <person name="Potier S."/>
            <person name="Richard G.-F."/>
            <person name="Straub M.-L."/>
            <person name="Suleau A."/>
            <person name="Swennen D."/>
            <person name="Tekaia F."/>
            <person name="Wesolowski-Louvel M."/>
            <person name="Westhof E."/>
            <person name="Wirth B."/>
            <person name="Zeniou-Meyer M."/>
            <person name="Zivanovic Y."/>
            <person name="Bolotin-Fukuhara M."/>
            <person name="Thierry A."/>
            <person name="Bouchier C."/>
            <person name="Caudron B."/>
            <person name="Scarpelli C."/>
            <person name="Gaillardin C."/>
            <person name="Weissenbach J."/>
            <person name="Wincker P."/>
            <person name="Souciet J.-L."/>
        </authorList>
    </citation>
    <scope>NUCLEOTIDE SEQUENCE [LARGE SCALE GENOMIC DNA]</scope>
    <source>
        <strain>ATCC 36239 / CBS 767 / BCRC 21394 / JCM 1990 / NBRC 0083 / IGC 2968</strain>
    </source>
</reference>
<organism>
    <name type="scientific">Debaryomyces hansenii (strain ATCC 36239 / CBS 767 / BCRC 21394 / JCM 1990 / NBRC 0083 / IGC 2968)</name>
    <name type="common">Yeast</name>
    <name type="synonym">Torulaspora hansenii</name>
    <dbReference type="NCBI Taxonomy" id="284592"/>
    <lineage>
        <taxon>Eukaryota</taxon>
        <taxon>Fungi</taxon>
        <taxon>Dikarya</taxon>
        <taxon>Ascomycota</taxon>
        <taxon>Saccharomycotina</taxon>
        <taxon>Pichiomycetes</taxon>
        <taxon>Debaryomycetaceae</taxon>
        <taxon>Debaryomyces</taxon>
    </lineage>
</organism>
<accession>Q6BUJ2</accession>
<evidence type="ECO:0000250" key="1"/>
<evidence type="ECO:0000256" key="2">
    <source>
        <dbReference type="SAM" id="MobiDB-lite"/>
    </source>
</evidence>
<evidence type="ECO:0000305" key="3"/>
<name>NSA1_DEBHA</name>
<sequence>MKILVTSDDTGAVKEVVCSRGTDTSKQDAKQPKSIKNICSEPGASVRTRVLHMVNFKSTFLVASRLGGSVTIYDLNHEEYELVHTYQLAISNEDKPISLIELEEFDVVVVAFESGKVFVINLNNGKFDLDPIEIQLPGKKGISAFINNPHEAGVFACGGKENDARIIRLFEGEITKDVFEAENKQEFFQPDVIFTARNVKNDHLDLRPPIWISSILFFEEKPKDGYKFLTSTRYGQVRIYDTTHGKRPIQDYKVCEKPIVTLNFADSEEEVIVSDTHNLVAKYSLAQIDSKAFKTHSASAGEITKPVSKLLGKFSAGGNTGAIVGVNIFDDEIISTGGLDRYLRTYDISSREILAKVYLGVQISDVLMLDSEDEEEEEPESEMGDKRKKNIEKRRRKALEAEENESDEEELWNQLEENNKTKIEKKKRRI</sequence>
<dbReference type="EMBL" id="CR382135">
    <property type="protein sequence ID" value="CAG86198.1"/>
    <property type="molecule type" value="Genomic_DNA"/>
</dbReference>
<dbReference type="RefSeq" id="XP_458127.1">
    <property type="nucleotide sequence ID" value="XM_458127.1"/>
</dbReference>
<dbReference type="SMR" id="Q6BUJ2"/>
<dbReference type="FunCoup" id="Q6BUJ2">
    <property type="interactions" value="678"/>
</dbReference>
<dbReference type="STRING" id="284592.Q6BUJ2"/>
<dbReference type="GeneID" id="2900161"/>
<dbReference type="KEGG" id="dha:DEHA2C10186g"/>
<dbReference type="VEuPathDB" id="FungiDB:DEHA2C10186g"/>
<dbReference type="eggNOG" id="KOG3881">
    <property type="taxonomic scope" value="Eukaryota"/>
</dbReference>
<dbReference type="HOGENOM" id="CLU_033769_4_0_1"/>
<dbReference type="InParanoid" id="Q6BUJ2"/>
<dbReference type="OMA" id="IWEAKNV"/>
<dbReference type="OrthoDB" id="18388at2759"/>
<dbReference type="Proteomes" id="UP000000599">
    <property type="component" value="Chromosome C"/>
</dbReference>
<dbReference type="GO" id="GO:0005730">
    <property type="term" value="C:nucleolus"/>
    <property type="evidence" value="ECO:0007669"/>
    <property type="project" value="UniProtKB-SubCell"/>
</dbReference>
<dbReference type="GO" id="GO:0030687">
    <property type="term" value="C:preribosome, large subunit precursor"/>
    <property type="evidence" value="ECO:0007669"/>
    <property type="project" value="TreeGrafter"/>
</dbReference>
<dbReference type="GO" id="GO:0042273">
    <property type="term" value="P:ribosomal large subunit biogenesis"/>
    <property type="evidence" value="ECO:0007669"/>
    <property type="project" value="InterPro"/>
</dbReference>
<dbReference type="GO" id="GO:0006364">
    <property type="term" value="P:rRNA processing"/>
    <property type="evidence" value="ECO:0007669"/>
    <property type="project" value="UniProtKB-KW"/>
</dbReference>
<dbReference type="CDD" id="cd22858">
    <property type="entry name" value="Nsa1"/>
    <property type="match status" value="1"/>
</dbReference>
<dbReference type="Gene3D" id="2.130.10.10">
    <property type="entry name" value="YVTN repeat-like/Quinoprotein amine dehydrogenase"/>
    <property type="match status" value="1"/>
</dbReference>
<dbReference type="InterPro" id="IPR015943">
    <property type="entry name" value="WD40/YVTN_repeat-like_dom_sf"/>
</dbReference>
<dbReference type="InterPro" id="IPR036322">
    <property type="entry name" value="WD40_repeat_dom_sf"/>
</dbReference>
<dbReference type="InterPro" id="IPR037379">
    <property type="entry name" value="WDR74/Nsa1"/>
</dbReference>
<dbReference type="PANTHER" id="PTHR16038">
    <property type="entry name" value="NOP SEVEN ASSOCIATED PROTEIN 1"/>
    <property type="match status" value="1"/>
</dbReference>
<dbReference type="PANTHER" id="PTHR16038:SF4">
    <property type="entry name" value="WD REPEAT-CONTAINING PROTEIN 74"/>
    <property type="match status" value="1"/>
</dbReference>
<dbReference type="SUPFAM" id="SSF50978">
    <property type="entry name" value="WD40 repeat-like"/>
    <property type="match status" value="1"/>
</dbReference>
<proteinExistence type="inferred from homology"/>